<dbReference type="EC" id="2.3.2.27" evidence="1"/>
<dbReference type="EMBL" id="AK035832">
    <property type="protein sequence ID" value="BAC29205.1"/>
    <property type="molecule type" value="mRNA"/>
</dbReference>
<dbReference type="EMBL" id="AK044638">
    <property type="protein sequence ID" value="BAC32015.1"/>
    <property type="molecule type" value="mRNA"/>
</dbReference>
<dbReference type="EMBL" id="BC118961">
    <property type="protein sequence ID" value="AAI18962.1"/>
    <property type="molecule type" value="mRNA"/>
</dbReference>
<dbReference type="CCDS" id="CCDS15204.1"/>
<dbReference type="RefSeq" id="NP_001153840.1">
    <property type="nucleotide sequence ID" value="NM_001160368.1"/>
</dbReference>
<dbReference type="RefSeq" id="NP_848894.1">
    <property type="nucleotide sequence ID" value="NM_178779.4"/>
</dbReference>
<dbReference type="RefSeq" id="XP_006529762.1">
    <property type="nucleotide sequence ID" value="XM_006529699.3"/>
</dbReference>
<dbReference type="RefSeq" id="XP_017176696.1">
    <property type="nucleotide sequence ID" value="XM_017321207.3"/>
</dbReference>
<dbReference type="SMR" id="Q8BG47"/>
<dbReference type="FunCoup" id="Q8BG47">
    <property type="interactions" value="238"/>
</dbReference>
<dbReference type="STRING" id="10090.ENSMUSP00000050103"/>
<dbReference type="PhosphoSitePlus" id="Q8BG47"/>
<dbReference type="PaxDb" id="10090-ENSMUSP00000050103"/>
<dbReference type="ProteomicsDB" id="300415"/>
<dbReference type="Antibodypedia" id="71070">
    <property type="antibodies" value="10 antibodies from 7 providers"/>
</dbReference>
<dbReference type="DNASU" id="320311"/>
<dbReference type="Ensembl" id="ENSMUST00000058688.7">
    <property type="protein sequence ID" value="ENSMUSP00000050103.6"/>
    <property type="gene ID" value="ENSMUSG00000047496.7"/>
</dbReference>
<dbReference type="Ensembl" id="ENSMUST00000172299.2">
    <property type="protein sequence ID" value="ENSMUSP00000128632.2"/>
    <property type="gene ID" value="ENSMUSG00000047496.7"/>
</dbReference>
<dbReference type="GeneID" id="320311"/>
<dbReference type="KEGG" id="mmu:320311"/>
<dbReference type="UCSC" id="uc011wpy.1">
    <property type="organism name" value="mouse"/>
</dbReference>
<dbReference type="AGR" id="MGI:2443787"/>
<dbReference type="CTD" id="220441"/>
<dbReference type="MGI" id="MGI:2443787">
    <property type="gene designation" value="Rnf152"/>
</dbReference>
<dbReference type="VEuPathDB" id="HostDB:ENSMUSG00000047496"/>
<dbReference type="eggNOG" id="KOG2177">
    <property type="taxonomic scope" value="Eukaryota"/>
</dbReference>
<dbReference type="GeneTree" id="ENSGT00730000111317"/>
<dbReference type="HOGENOM" id="CLU_1414689_0_0_1"/>
<dbReference type="InParanoid" id="Q8BG47"/>
<dbReference type="OMA" id="REIRCPW"/>
<dbReference type="OrthoDB" id="6106880at2759"/>
<dbReference type="PhylomeDB" id="Q8BG47"/>
<dbReference type="TreeFam" id="TF331690"/>
<dbReference type="Reactome" id="R-MMU-8866654">
    <property type="pathway name" value="E3 ubiquitin ligases ubiquitinate target proteins"/>
</dbReference>
<dbReference type="UniPathway" id="UPA00143"/>
<dbReference type="BioGRID-ORCS" id="320311">
    <property type="hits" value="2 hits in 77 CRISPR screens"/>
</dbReference>
<dbReference type="ChiTaRS" id="Rnf152">
    <property type="organism name" value="mouse"/>
</dbReference>
<dbReference type="PRO" id="PR:Q8BG47"/>
<dbReference type="Proteomes" id="UP000000589">
    <property type="component" value="Chromosome 1"/>
</dbReference>
<dbReference type="RNAct" id="Q8BG47">
    <property type="molecule type" value="protein"/>
</dbReference>
<dbReference type="Bgee" id="ENSMUSG00000047496">
    <property type="expression patterns" value="Expressed in pigmented layer of retina and 181 other cell types or tissues"/>
</dbReference>
<dbReference type="GO" id="GO:0005765">
    <property type="term" value="C:lysosomal membrane"/>
    <property type="evidence" value="ECO:0000250"/>
    <property type="project" value="UniProtKB"/>
</dbReference>
<dbReference type="GO" id="GO:0005764">
    <property type="term" value="C:lysosome"/>
    <property type="evidence" value="ECO:0000250"/>
    <property type="project" value="UniProtKB"/>
</dbReference>
<dbReference type="GO" id="GO:0031090">
    <property type="term" value="C:organelle membrane"/>
    <property type="evidence" value="ECO:0000250"/>
    <property type="project" value="UniProtKB"/>
</dbReference>
<dbReference type="GO" id="GO:0031267">
    <property type="term" value="F:small GTPase binding"/>
    <property type="evidence" value="ECO:0007669"/>
    <property type="project" value="Ensembl"/>
</dbReference>
<dbReference type="GO" id="GO:0061630">
    <property type="term" value="F:ubiquitin protein ligase activity"/>
    <property type="evidence" value="ECO:0007669"/>
    <property type="project" value="Ensembl"/>
</dbReference>
<dbReference type="GO" id="GO:0004842">
    <property type="term" value="F:ubiquitin-protein transferase activity"/>
    <property type="evidence" value="ECO:0000250"/>
    <property type="project" value="UniProtKB"/>
</dbReference>
<dbReference type="GO" id="GO:0008270">
    <property type="term" value="F:zinc ion binding"/>
    <property type="evidence" value="ECO:0007669"/>
    <property type="project" value="UniProtKB-KW"/>
</dbReference>
<dbReference type="GO" id="GO:0006915">
    <property type="term" value="P:apoptotic process"/>
    <property type="evidence" value="ECO:0007669"/>
    <property type="project" value="UniProtKB-KW"/>
</dbReference>
<dbReference type="GO" id="GO:0034198">
    <property type="term" value="P:cellular response to amino acid starvation"/>
    <property type="evidence" value="ECO:0000314"/>
    <property type="project" value="UniProtKB"/>
</dbReference>
<dbReference type="GO" id="GO:1904262">
    <property type="term" value="P:negative regulation of TORC1 signaling"/>
    <property type="evidence" value="ECO:0000315"/>
    <property type="project" value="UniProtKB"/>
</dbReference>
<dbReference type="GO" id="GO:0010508">
    <property type="term" value="P:positive regulation of autophagy"/>
    <property type="evidence" value="ECO:0000315"/>
    <property type="project" value="UniProtKB"/>
</dbReference>
<dbReference type="GO" id="GO:0070936">
    <property type="term" value="P:protein K48-linked ubiquitination"/>
    <property type="evidence" value="ECO:0000250"/>
    <property type="project" value="UniProtKB"/>
</dbReference>
<dbReference type="GO" id="GO:0070534">
    <property type="term" value="P:protein K63-linked ubiquitination"/>
    <property type="evidence" value="ECO:0000250"/>
    <property type="project" value="UniProtKB"/>
</dbReference>
<dbReference type="GO" id="GO:0006513">
    <property type="term" value="P:protein monoubiquitination"/>
    <property type="evidence" value="ECO:0000250"/>
    <property type="project" value="UniProtKB"/>
</dbReference>
<dbReference type="CDD" id="cd16548">
    <property type="entry name" value="RING-HC_RNF152"/>
    <property type="match status" value="1"/>
</dbReference>
<dbReference type="FunFam" id="3.30.40.10:FF:000197">
    <property type="entry name" value="E3 ubiquitin-protein ligase RNF152"/>
    <property type="match status" value="1"/>
</dbReference>
<dbReference type="Gene3D" id="3.30.40.10">
    <property type="entry name" value="Zinc/RING finger domain, C3HC4 (zinc finger)"/>
    <property type="match status" value="1"/>
</dbReference>
<dbReference type="InterPro" id="IPR033609">
    <property type="entry name" value="RING_RNF152"/>
</dbReference>
<dbReference type="InterPro" id="IPR045744">
    <property type="entry name" value="RNF152_C"/>
</dbReference>
<dbReference type="InterPro" id="IPR001841">
    <property type="entry name" value="Znf_RING"/>
</dbReference>
<dbReference type="InterPro" id="IPR013083">
    <property type="entry name" value="Znf_RING/FYVE/PHD"/>
</dbReference>
<dbReference type="PANTHER" id="PTHR25464:SF1">
    <property type="entry name" value="E3 UBIQUITIN-PROTEIN LIGASE RNF152"/>
    <property type="match status" value="1"/>
</dbReference>
<dbReference type="PANTHER" id="PTHR25464">
    <property type="entry name" value="TRIPARTITE MOTIF-CONTAINING PROTEIN 2-LIKE PROTEIN"/>
    <property type="match status" value="1"/>
</dbReference>
<dbReference type="Pfam" id="PF19325">
    <property type="entry name" value="RNF152_C"/>
    <property type="match status" value="1"/>
</dbReference>
<dbReference type="Pfam" id="PF14634">
    <property type="entry name" value="zf-RING_5"/>
    <property type="match status" value="1"/>
</dbReference>
<dbReference type="SMART" id="SM00184">
    <property type="entry name" value="RING"/>
    <property type="match status" value="1"/>
</dbReference>
<dbReference type="SUPFAM" id="SSF57850">
    <property type="entry name" value="RING/U-box"/>
    <property type="match status" value="1"/>
</dbReference>
<dbReference type="PROSITE" id="PS50089">
    <property type="entry name" value="ZF_RING_2"/>
    <property type="match status" value="1"/>
</dbReference>
<gene>
    <name evidence="8" type="primary">Rnf152</name>
</gene>
<accession>Q8BG47</accession>
<accession>Q0VF67</accession>
<reference key="1">
    <citation type="journal article" date="2005" name="Science">
        <title>The transcriptional landscape of the mammalian genome.</title>
        <authorList>
            <person name="Carninci P."/>
            <person name="Kasukawa T."/>
            <person name="Katayama S."/>
            <person name="Gough J."/>
            <person name="Frith M.C."/>
            <person name="Maeda N."/>
            <person name="Oyama R."/>
            <person name="Ravasi T."/>
            <person name="Lenhard B."/>
            <person name="Wells C."/>
            <person name="Kodzius R."/>
            <person name="Shimokawa K."/>
            <person name="Bajic V.B."/>
            <person name="Brenner S.E."/>
            <person name="Batalov S."/>
            <person name="Forrest A.R."/>
            <person name="Zavolan M."/>
            <person name="Davis M.J."/>
            <person name="Wilming L.G."/>
            <person name="Aidinis V."/>
            <person name="Allen J.E."/>
            <person name="Ambesi-Impiombato A."/>
            <person name="Apweiler R."/>
            <person name="Aturaliya R.N."/>
            <person name="Bailey T.L."/>
            <person name="Bansal M."/>
            <person name="Baxter L."/>
            <person name="Beisel K.W."/>
            <person name="Bersano T."/>
            <person name="Bono H."/>
            <person name="Chalk A.M."/>
            <person name="Chiu K.P."/>
            <person name="Choudhary V."/>
            <person name="Christoffels A."/>
            <person name="Clutterbuck D.R."/>
            <person name="Crowe M.L."/>
            <person name="Dalla E."/>
            <person name="Dalrymple B.P."/>
            <person name="de Bono B."/>
            <person name="Della Gatta G."/>
            <person name="di Bernardo D."/>
            <person name="Down T."/>
            <person name="Engstrom P."/>
            <person name="Fagiolini M."/>
            <person name="Faulkner G."/>
            <person name="Fletcher C.F."/>
            <person name="Fukushima T."/>
            <person name="Furuno M."/>
            <person name="Futaki S."/>
            <person name="Gariboldi M."/>
            <person name="Georgii-Hemming P."/>
            <person name="Gingeras T.R."/>
            <person name="Gojobori T."/>
            <person name="Green R.E."/>
            <person name="Gustincich S."/>
            <person name="Harbers M."/>
            <person name="Hayashi Y."/>
            <person name="Hensch T.K."/>
            <person name="Hirokawa N."/>
            <person name="Hill D."/>
            <person name="Huminiecki L."/>
            <person name="Iacono M."/>
            <person name="Ikeo K."/>
            <person name="Iwama A."/>
            <person name="Ishikawa T."/>
            <person name="Jakt M."/>
            <person name="Kanapin A."/>
            <person name="Katoh M."/>
            <person name="Kawasawa Y."/>
            <person name="Kelso J."/>
            <person name="Kitamura H."/>
            <person name="Kitano H."/>
            <person name="Kollias G."/>
            <person name="Krishnan S.P."/>
            <person name="Kruger A."/>
            <person name="Kummerfeld S.K."/>
            <person name="Kurochkin I.V."/>
            <person name="Lareau L.F."/>
            <person name="Lazarevic D."/>
            <person name="Lipovich L."/>
            <person name="Liu J."/>
            <person name="Liuni S."/>
            <person name="McWilliam S."/>
            <person name="Madan Babu M."/>
            <person name="Madera M."/>
            <person name="Marchionni L."/>
            <person name="Matsuda H."/>
            <person name="Matsuzawa S."/>
            <person name="Miki H."/>
            <person name="Mignone F."/>
            <person name="Miyake S."/>
            <person name="Morris K."/>
            <person name="Mottagui-Tabar S."/>
            <person name="Mulder N."/>
            <person name="Nakano N."/>
            <person name="Nakauchi H."/>
            <person name="Ng P."/>
            <person name="Nilsson R."/>
            <person name="Nishiguchi S."/>
            <person name="Nishikawa S."/>
            <person name="Nori F."/>
            <person name="Ohara O."/>
            <person name="Okazaki Y."/>
            <person name="Orlando V."/>
            <person name="Pang K.C."/>
            <person name="Pavan W.J."/>
            <person name="Pavesi G."/>
            <person name="Pesole G."/>
            <person name="Petrovsky N."/>
            <person name="Piazza S."/>
            <person name="Reed J."/>
            <person name="Reid J.F."/>
            <person name="Ring B.Z."/>
            <person name="Ringwald M."/>
            <person name="Rost B."/>
            <person name="Ruan Y."/>
            <person name="Salzberg S.L."/>
            <person name="Sandelin A."/>
            <person name="Schneider C."/>
            <person name="Schoenbach C."/>
            <person name="Sekiguchi K."/>
            <person name="Semple C.A."/>
            <person name="Seno S."/>
            <person name="Sessa L."/>
            <person name="Sheng Y."/>
            <person name="Shibata Y."/>
            <person name="Shimada H."/>
            <person name="Shimada K."/>
            <person name="Silva D."/>
            <person name="Sinclair B."/>
            <person name="Sperling S."/>
            <person name="Stupka E."/>
            <person name="Sugiura K."/>
            <person name="Sultana R."/>
            <person name="Takenaka Y."/>
            <person name="Taki K."/>
            <person name="Tammoja K."/>
            <person name="Tan S.L."/>
            <person name="Tang S."/>
            <person name="Taylor M.S."/>
            <person name="Tegner J."/>
            <person name="Teichmann S.A."/>
            <person name="Ueda H.R."/>
            <person name="van Nimwegen E."/>
            <person name="Verardo R."/>
            <person name="Wei C.L."/>
            <person name="Yagi K."/>
            <person name="Yamanishi H."/>
            <person name="Zabarovsky E."/>
            <person name="Zhu S."/>
            <person name="Zimmer A."/>
            <person name="Hide W."/>
            <person name="Bult C."/>
            <person name="Grimmond S.M."/>
            <person name="Teasdale R.D."/>
            <person name="Liu E.T."/>
            <person name="Brusic V."/>
            <person name="Quackenbush J."/>
            <person name="Wahlestedt C."/>
            <person name="Mattick J.S."/>
            <person name="Hume D.A."/>
            <person name="Kai C."/>
            <person name="Sasaki D."/>
            <person name="Tomaru Y."/>
            <person name="Fukuda S."/>
            <person name="Kanamori-Katayama M."/>
            <person name="Suzuki M."/>
            <person name="Aoki J."/>
            <person name="Arakawa T."/>
            <person name="Iida J."/>
            <person name="Imamura K."/>
            <person name="Itoh M."/>
            <person name="Kato T."/>
            <person name="Kawaji H."/>
            <person name="Kawagashira N."/>
            <person name="Kawashima T."/>
            <person name="Kojima M."/>
            <person name="Kondo S."/>
            <person name="Konno H."/>
            <person name="Nakano K."/>
            <person name="Ninomiya N."/>
            <person name="Nishio T."/>
            <person name="Okada M."/>
            <person name="Plessy C."/>
            <person name="Shibata K."/>
            <person name="Shiraki T."/>
            <person name="Suzuki S."/>
            <person name="Tagami M."/>
            <person name="Waki K."/>
            <person name="Watahiki A."/>
            <person name="Okamura-Oho Y."/>
            <person name="Suzuki H."/>
            <person name="Kawai J."/>
            <person name="Hayashizaki Y."/>
        </authorList>
    </citation>
    <scope>NUCLEOTIDE SEQUENCE [LARGE SCALE MRNA]</scope>
    <source>
        <strain>C57BL/6J</strain>
        <tissue>Cerebellum</tissue>
        <tissue>Retina</tissue>
    </source>
</reference>
<reference key="2">
    <citation type="journal article" date="2004" name="Genome Res.">
        <title>The status, quality, and expansion of the NIH full-length cDNA project: the Mammalian Gene Collection (MGC).</title>
        <authorList>
            <consortium name="The MGC Project Team"/>
        </authorList>
    </citation>
    <scope>NUCLEOTIDE SEQUENCE [LARGE SCALE MRNA]</scope>
</reference>
<reference key="3">
    <citation type="journal article" date="2015" name="Mol. Cell">
        <title>The ubiquitination of RagA GTPase by RNF152 negatively regulates mTORC1 activation.</title>
        <authorList>
            <person name="Deng L."/>
            <person name="Jiang C."/>
            <person name="Chen L."/>
            <person name="Jin J."/>
            <person name="Wei J."/>
            <person name="Zhao L."/>
            <person name="Chen M."/>
            <person name="Pan W."/>
            <person name="Xu Y."/>
            <person name="Chu H."/>
            <person name="Wang X."/>
            <person name="Ge X."/>
            <person name="Li D."/>
            <person name="Liao L."/>
            <person name="Liu M."/>
            <person name="Li L."/>
            <person name="Wang P."/>
        </authorList>
    </citation>
    <scope>FUNCTION</scope>
    <scope>DISRUPTION PHENOTYPE</scope>
</reference>
<reference key="4">
    <citation type="journal article" date="2018" name="PLoS ONE">
        <title>Sec16A, a key protein in COPII vesicle formation, regulates the stability and localization of the novel ubiquitin ligase RNF183.</title>
        <authorList>
            <person name="Wu Y."/>
            <person name="Guo X.P."/>
            <person name="Kanemoto S."/>
            <person name="Maeoka Y."/>
            <person name="Saito A."/>
            <person name="Asada R."/>
            <person name="Matsuhisa K."/>
            <person name="Ohtake Y."/>
            <person name="Imaizumi K."/>
            <person name="Kaneko M."/>
        </authorList>
    </citation>
    <scope>INTERACTION WITH SEC16A</scope>
</reference>
<evidence type="ECO:0000250" key="1">
    <source>
        <dbReference type="UniProtKB" id="Q8N8N0"/>
    </source>
</evidence>
<evidence type="ECO:0000255" key="2"/>
<evidence type="ECO:0000255" key="3">
    <source>
        <dbReference type="PROSITE-ProRule" id="PRU00175"/>
    </source>
</evidence>
<evidence type="ECO:0000256" key="4">
    <source>
        <dbReference type="SAM" id="MobiDB-lite"/>
    </source>
</evidence>
<evidence type="ECO:0000269" key="5">
    <source>
    </source>
</evidence>
<evidence type="ECO:0000269" key="6">
    <source>
    </source>
</evidence>
<evidence type="ECO:0000305" key="7"/>
<evidence type="ECO:0000312" key="8">
    <source>
        <dbReference type="MGI" id="MGI:2443787"/>
    </source>
</evidence>
<name>RN152_MOUSE</name>
<feature type="chain" id="PRO_0000056112" description="E3 ubiquitin-protein ligase RNF152">
    <location>
        <begin position="1"/>
        <end position="203"/>
    </location>
</feature>
<feature type="transmembrane region" description="Helical" evidence="2">
    <location>
        <begin position="167"/>
        <end position="187"/>
    </location>
</feature>
<feature type="zinc finger region" description="RING-type" evidence="3">
    <location>
        <begin position="12"/>
        <end position="55"/>
    </location>
</feature>
<feature type="region of interest" description="Necessary for interaction with RRAGA" evidence="1">
    <location>
        <begin position="106"/>
        <end position="165"/>
    </location>
</feature>
<feature type="region of interest" description="Disordered" evidence="4">
    <location>
        <begin position="139"/>
        <end position="158"/>
    </location>
</feature>
<sequence>METLSQDSLLECQICFNYYSPRRRPKLLDCKHTCCSVCLQQMRTSQKDVRCPWCRGITKLPPGFSVSQLPDDPEVLAVIAIPHTSEHTPVFIKLPSNGCYMLPLPISKERTLLPGDMGCRLLPGSQQKSLTVVTIPAEQQPLQGGAPPEAVEEEPDRRGVVKSSTWSGVCTVILVACVLVFLLGIVLHNMSCISKRFTVISCG</sequence>
<organism>
    <name type="scientific">Mus musculus</name>
    <name type="common">Mouse</name>
    <dbReference type="NCBI Taxonomy" id="10090"/>
    <lineage>
        <taxon>Eukaryota</taxon>
        <taxon>Metazoa</taxon>
        <taxon>Chordata</taxon>
        <taxon>Craniata</taxon>
        <taxon>Vertebrata</taxon>
        <taxon>Euteleostomi</taxon>
        <taxon>Mammalia</taxon>
        <taxon>Eutheria</taxon>
        <taxon>Euarchontoglires</taxon>
        <taxon>Glires</taxon>
        <taxon>Rodentia</taxon>
        <taxon>Myomorpha</taxon>
        <taxon>Muroidea</taxon>
        <taxon>Muridae</taxon>
        <taxon>Murinae</taxon>
        <taxon>Mus</taxon>
        <taxon>Mus</taxon>
    </lineage>
</organism>
<protein>
    <recommendedName>
        <fullName evidence="7">E3 ubiquitin-protein ligase RNF152</fullName>
        <ecNumber evidence="1">2.3.2.27</ecNumber>
    </recommendedName>
    <alternativeName>
        <fullName evidence="8">RING finger protein 152</fullName>
    </alternativeName>
    <alternativeName>
        <fullName evidence="7">RING-type E3 ubiquitin transferase RNF152</fullName>
    </alternativeName>
</protein>
<proteinExistence type="evidence at protein level"/>
<keyword id="KW-0053">Apoptosis</keyword>
<keyword id="KW-0458">Lysosome</keyword>
<keyword id="KW-0472">Membrane</keyword>
<keyword id="KW-0479">Metal-binding</keyword>
<keyword id="KW-1185">Reference proteome</keyword>
<keyword id="KW-0808">Transferase</keyword>
<keyword id="KW-0812">Transmembrane</keyword>
<keyword id="KW-1133">Transmembrane helix</keyword>
<keyword id="KW-0832">Ubl conjugation</keyword>
<keyword id="KW-0833">Ubl conjugation pathway</keyword>
<keyword id="KW-0862">Zinc</keyword>
<keyword id="KW-0863">Zinc-finger</keyword>
<comment type="function">
    <text evidence="1 5">E3 ubiquitin-protein ligase that acts as a negative regulator of mTORC1 signaling by mediating ubiquitination of RagA/RRAGA and RHEB (PubMed:25936802). Catalyzes 'Lys-63'-linked polyubiquitination of RagA/RRAGA in response to amino acid starvation, thereby regulating mTORC1 signaling (PubMed:25936802). Also mediates monoubiquitination of RHEB, promoting its association with the TSC-TBC complex and subsequent inhibition (By similarity). Also mediates 'Lys-48'-linked polyubiquitination of target proteins and their subsequent targeting to the proteasome for degradation (By similarity). Induces apoptosis when overexpressed (By similarity).</text>
</comment>
<comment type="catalytic activity">
    <reaction evidence="1">
        <text>S-ubiquitinyl-[E2 ubiquitin-conjugating enzyme]-L-cysteine + [acceptor protein]-L-lysine = [E2 ubiquitin-conjugating enzyme]-L-cysteine + N(6)-ubiquitinyl-[acceptor protein]-L-lysine.</text>
        <dbReference type="EC" id="2.3.2.27"/>
    </reaction>
</comment>
<comment type="pathway">
    <text evidence="1">Protein modification; protein ubiquitination.</text>
</comment>
<comment type="subunit">
    <text evidence="1 6">Interacts with RRAGA (inactive GDP-bound form); stimulated by amino acid starvation (By similarity). Interacts with SEC16A (PubMed:29300766).</text>
</comment>
<comment type="subcellular location">
    <subcellularLocation>
        <location evidence="1">Lysosome membrane</location>
        <topology evidence="1">Single-pass membrane protein</topology>
    </subcellularLocation>
</comment>
<comment type="PTM">
    <text evidence="1">Ubiquitinated. Autoubiquitinated in vitro, leading to its degradation by the proteasome.</text>
</comment>
<comment type="disruption phenotype">
    <text evidence="5">Mice lacking Rnf152 do not show overt embryonic development defect.</text>
</comment>
<comment type="similarity">
    <text evidence="7">Belongs to the RNF152 family.</text>
</comment>